<comment type="function">
    <text evidence="2 12">Plasma membrane-anchored serine protease that cleaves at arginine residues (By similarity). Participates in proteolytic cascades of relevance for the normal physiologic function of the prostate. Androgen-induced TMPRSS2 activates several substrates that include pro-hepatocyte growth factor/HGF, the protease activated receptor-2/F2RL1 or matriptase/ST14 leading to extracellular matrix disruption (By similarity). In addition, activates trigeminal neurons and contribute to both spontaneous pain and mechanical allodynia (PubMed:25734995).</text>
</comment>
<comment type="function">
    <text evidence="9 10 11">(Microbial infection) Essential for spread and pathogenesis of influenza A virus (strains H1N1, H3N2 and H7N9) and is involved in proteolytic cleavage and activation of hemagglutinin (HA) protein which is essential for viral infectivity.</text>
</comment>
<comment type="catalytic activity">
    <reaction evidence="2">
        <text>The enzyme cleaves angiotensin-converting enzyme 2 (EC 3.4.17.23) and cleaves influenzea A and B virus and coronavirus spike glycoproteins at arginine residues.</text>
        <dbReference type="EC" id="3.4.21.122"/>
    </reaction>
</comment>
<comment type="subunit">
    <text evidence="2">The catalytically active form interacts with ACE2.</text>
</comment>
<comment type="subcellular location">
    <subcellularLocation>
        <location evidence="2">Cell membrane</location>
        <topology evidence="2">Single-pass type II membrane protein</topology>
    </subcellularLocation>
</comment>
<comment type="subcellular location">
    <molecule>Transmembrane protease serine 2 catalytic chain</molecule>
    <subcellularLocation>
        <location evidence="2">Secreted</location>
    </subcellularLocation>
    <text evidence="2">Activated by cleavage and secreted.</text>
</comment>
<comment type="tissue specificity">
    <text evidence="7 10">Larynx, trachea and bronchi, lung, prostate and kidney.</text>
</comment>
<comment type="PTM">
    <text evidence="2">Proteolytically processed; by an autocatalytic mechanism. Autocleavage induces active conformation.</text>
</comment>
<comment type="disruption phenotype">
    <text evidence="8 10 11">Knockout mice show normal growth and reach normal adulthood without having abnormalities in organ histology and alteration in protein levels of prostatic secretions (PubMed:16428450). Abrogation of viral spread and protection of mice from severe pathology and death are observed after infection with influenza A virus strains H1N1 and H7N9.</text>
</comment>
<comment type="similarity">
    <text evidence="6">Belongs to the peptidase S1 family.</text>
</comment>
<name>TMPS2_MOUSE</name>
<dbReference type="EC" id="3.4.21.122" evidence="2"/>
<dbReference type="EMBL" id="AF199362">
    <property type="protein sequence ID" value="AAF97867.1"/>
    <property type="molecule type" value="mRNA"/>
</dbReference>
<dbReference type="EMBL" id="AF243500">
    <property type="protein sequence ID" value="AAF64186.1"/>
    <property type="molecule type" value="mRNA"/>
</dbReference>
<dbReference type="EMBL" id="AF113596">
    <property type="protein sequence ID" value="AAF21308.1"/>
    <property type="molecule type" value="mRNA"/>
</dbReference>
<dbReference type="EMBL" id="BC038393">
    <property type="protein sequence ID" value="AAH38393.1"/>
    <property type="molecule type" value="mRNA"/>
</dbReference>
<dbReference type="EMBL" id="BC054348">
    <property type="protein sequence ID" value="AAH54348.1"/>
    <property type="molecule type" value="mRNA"/>
</dbReference>
<dbReference type="CCDS" id="CCDS37417.1"/>
<dbReference type="RefSeq" id="NP_056590.2">
    <property type="nucleotide sequence ID" value="NM_015775.2"/>
</dbReference>
<dbReference type="RefSeq" id="XP_006523127.1">
    <property type="nucleotide sequence ID" value="XM_006523064.3"/>
</dbReference>
<dbReference type="RefSeq" id="XP_006523128.1">
    <property type="nucleotide sequence ID" value="XM_006523065.2"/>
</dbReference>
<dbReference type="SMR" id="Q9JIQ8"/>
<dbReference type="FunCoup" id="Q9JIQ8">
    <property type="interactions" value="455"/>
</dbReference>
<dbReference type="STRING" id="10090.ENSMUSP00000000395"/>
<dbReference type="MEROPS" id="S01.247"/>
<dbReference type="GlyCosmos" id="Q9JIQ8">
    <property type="glycosylation" value="3 sites, No reported glycans"/>
</dbReference>
<dbReference type="GlyGen" id="Q9JIQ8">
    <property type="glycosylation" value="3 sites"/>
</dbReference>
<dbReference type="iPTMnet" id="Q9JIQ8"/>
<dbReference type="PhosphoSitePlus" id="Q9JIQ8"/>
<dbReference type="PaxDb" id="10090-ENSMUSP00000000395"/>
<dbReference type="ProteomicsDB" id="259042"/>
<dbReference type="Antibodypedia" id="2685">
    <property type="antibodies" value="333 antibodies from 35 providers"/>
</dbReference>
<dbReference type="DNASU" id="50528"/>
<dbReference type="Ensembl" id="ENSMUST00000000395.8">
    <property type="protein sequence ID" value="ENSMUSP00000000395.7"/>
    <property type="gene ID" value="ENSMUSG00000000385.9"/>
</dbReference>
<dbReference type="GeneID" id="50528"/>
<dbReference type="KEGG" id="mmu:50528"/>
<dbReference type="UCSC" id="uc008adl.1">
    <property type="organism name" value="mouse"/>
</dbReference>
<dbReference type="AGR" id="MGI:1354381"/>
<dbReference type="CTD" id="7113"/>
<dbReference type="MGI" id="MGI:1354381">
    <property type="gene designation" value="Tmprss2"/>
</dbReference>
<dbReference type="VEuPathDB" id="HostDB:ENSMUSG00000000385"/>
<dbReference type="eggNOG" id="KOG3627">
    <property type="taxonomic scope" value="Eukaryota"/>
</dbReference>
<dbReference type="GeneTree" id="ENSGT00940000155207"/>
<dbReference type="HOGENOM" id="CLU_006842_19_2_1"/>
<dbReference type="InParanoid" id="Q9JIQ8"/>
<dbReference type="OMA" id="AQRKSWH"/>
<dbReference type="OrthoDB" id="6380398at2759"/>
<dbReference type="PhylomeDB" id="Q9JIQ8"/>
<dbReference type="TreeFam" id="TF351678"/>
<dbReference type="BRENDA" id="3.4.21.B60">
    <property type="organism ID" value="3474"/>
</dbReference>
<dbReference type="BioGRID-ORCS" id="50528">
    <property type="hits" value="2 hits in 77 CRISPR screens"/>
</dbReference>
<dbReference type="ChiTaRS" id="Tmprss2">
    <property type="organism name" value="mouse"/>
</dbReference>
<dbReference type="PRO" id="PR:Q9JIQ8"/>
<dbReference type="Proteomes" id="UP000000589">
    <property type="component" value="Chromosome 16"/>
</dbReference>
<dbReference type="RNAct" id="Q9JIQ8">
    <property type="molecule type" value="protein"/>
</dbReference>
<dbReference type="Bgee" id="ENSMUSG00000000385">
    <property type="expression patterns" value="Expressed in paneth cell and 160 other cell types or tissues"/>
</dbReference>
<dbReference type="ExpressionAtlas" id="Q9JIQ8">
    <property type="expression patterns" value="baseline and differential"/>
</dbReference>
<dbReference type="GO" id="GO:0005576">
    <property type="term" value="C:extracellular region"/>
    <property type="evidence" value="ECO:0007669"/>
    <property type="project" value="UniProtKB-SubCell"/>
</dbReference>
<dbReference type="GO" id="GO:0005654">
    <property type="term" value="C:nucleoplasm"/>
    <property type="evidence" value="ECO:0007669"/>
    <property type="project" value="Ensembl"/>
</dbReference>
<dbReference type="GO" id="GO:0005886">
    <property type="term" value="C:plasma membrane"/>
    <property type="evidence" value="ECO:0000250"/>
    <property type="project" value="UniProtKB"/>
</dbReference>
<dbReference type="GO" id="GO:0046872">
    <property type="term" value="F:metal ion binding"/>
    <property type="evidence" value="ECO:0007669"/>
    <property type="project" value="UniProtKB-KW"/>
</dbReference>
<dbReference type="GO" id="GO:0004252">
    <property type="term" value="F:serine-type endopeptidase activity"/>
    <property type="evidence" value="ECO:0007669"/>
    <property type="project" value="Ensembl"/>
</dbReference>
<dbReference type="GO" id="GO:0046598">
    <property type="term" value="P:positive regulation of viral entry into host cell"/>
    <property type="evidence" value="ECO:0000250"/>
    <property type="project" value="UniProtKB"/>
</dbReference>
<dbReference type="GO" id="GO:0016540">
    <property type="term" value="P:protein autoprocessing"/>
    <property type="evidence" value="ECO:0000250"/>
    <property type="project" value="UniProtKB"/>
</dbReference>
<dbReference type="GO" id="GO:0006508">
    <property type="term" value="P:proteolysis"/>
    <property type="evidence" value="ECO:0000314"/>
    <property type="project" value="UniProtKB"/>
</dbReference>
<dbReference type="CDD" id="cd00112">
    <property type="entry name" value="LDLa"/>
    <property type="match status" value="1"/>
</dbReference>
<dbReference type="CDD" id="cd00190">
    <property type="entry name" value="Tryp_SPc"/>
    <property type="match status" value="1"/>
</dbReference>
<dbReference type="FunFam" id="3.10.250.10:FF:000027">
    <property type="entry name" value="Transmembrane serine protease 2"/>
    <property type="match status" value="1"/>
</dbReference>
<dbReference type="FunFam" id="2.40.10.10:FF:000003">
    <property type="entry name" value="Transmembrane serine protease 3"/>
    <property type="match status" value="1"/>
</dbReference>
<dbReference type="Gene3D" id="4.10.400.10">
    <property type="entry name" value="Low-density Lipoprotein Receptor"/>
    <property type="match status" value="1"/>
</dbReference>
<dbReference type="Gene3D" id="3.10.250.10">
    <property type="entry name" value="SRCR-like domain"/>
    <property type="match status" value="1"/>
</dbReference>
<dbReference type="Gene3D" id="2.40.10.10">
    <property type="entry name" value="Trypsin-like serine proteases"/>
    <property type="match status" value="1"/>
</dbReference>
<dbReference type="InterPro" id="IPR036055">
    <property type="entry name" value="LDL_receptor-like_sf"/>
</dbReference>
<dbReference type="InterPro" id="IPR023415">
    <property type="entry name" value="LDLR_class-A_CS"/>
</dbReference>
<dbReference type="InterPro" id="IPR002172">
    <property type="entry name" value="LDrepeatLR_classA_rpt"/>
</dbReference>
<dbReference type="InterPro" id="IPR009003">
    <property type="entry name" value="Peptidase_S1_PA"/>
</dbReference>
<dbReference type="InterPro" id="IPR043504">
    <property type="entry name" value="Peptidase_S1_PA_chymotrypsin"/>
</dbReference>
<dbReference type="InterPro" id="IPR001314">
    <property type="entry name" value="Peptidase_S1A"/>
</dbReference>
<dbReference type="InterPro" id="IPR001190">
    <property type="entry name" value="SRCR"/>
</dbReference>
<dbReference type="InterPro" id="IPR036772">
    <property type="entry name" value="SRCR-like_dom_sf"/>
</dbReference>
<dbReference type="InterPro" id="IPR001254">
    <property type="entry name" value="Trypsin_dom"/>
</dbReference>
<dbReference type="InterPro" id="IPR018114">
    <property type="entry name" value="TRYPSIN_HIS"/>
</dbReference>
<dbReference type="InterPro" id="IPR033116">
    <property type="entry name" value="TRYPSIN_SER"/>
</dbReference>
<dbReference type="PANTHER" id="PTHR24252">
    <property type="entry name" value="ACROSIN-RELATED"/>
    <property type="match status" value="1"/>
</dbReference>
<dbReference type="PANTHER" id="PTHR24252:SF30">
    <property type="entry name" value="TRANSMEMBRANE SERINE PROTEASE 2"/>
    <property type="match status" value="1"/>
</dbReference>
<dbReference type="Pfam" id="PF00057">
    <property type="entry name" value="Ldl_recept_a"/>
    <property type="match status" value="1"/>
</dbReference>
<dbReference type="Pfam" id="PF15494">
    <property type="entry name" value="SRCR_2"/>
    <property type="match status" value="1"/>
</dbReference>
<dbReference type="Pfam" id="PF00089">
    <property type="entry name" value="Trypsin"/>
    <property type="match status" value="1"/>
</dbReference>
<dbReference type="PRINTS" id="PR00722">
    <property type="entry name" value="CHYMOTRYPSIN"/>
</dbReference>
<dbReference type="SMART" id="SM00192">
    <property type="entry name" value="LDLa"/>
    <property type="match status" value="1"/>
</dbReference>
<dbReference type="SMART" id="SM00202">
    <property type="entry name" value="SR"/>
    <property type="match status" value="1"/>
</dbReference>
<dbReference type="SMART" id="SM00020">
    <property type="entry name" value="Tryp_SPc"/>
    <property type="match status" value="1"/>
</dbReference>
<dbReference type="SUPFAM" id="SSF57424">
    <property type="entry name" value="LDL receptor-like module"/>
    <property type="match status" value="1"/>
</dbReference>
<dbReference type="SUPFAM" id="SSF56487">
    <property type="entry name" value="SRCR-like"/>
    <property type="match status" value="1"/>
</dbReference>
<dbReference type="SUPFAM" id="SSF50494">
    <property type="entry name" value="Trypsin-like serine proteases"/>
    <property type="match status" value="1"/>
</dbReference>
<dbReference type="PROSITE" id="PS01209">
    <property type="entry name" value="LDLRA_1"/>
    <property type="match status" value="1"/>
</dbReference>
<dbReference type="PROSITE" id="PS50068">
    <property type="entry name" value="LDLRA_2"/>
    <property type="match status" value="1"/>
</dbReference>
<dbReference type="PROSITE" id="PS50287">
    <property type="entry name" value="SRCR_2"/>
    <property type="match status" value="1"/>
</dbReference>
<dbReference type="PROSITE" id="PS50240">
    <property type="entry name" value="TRYPSIN_DOM"/>
    <property type="match status" value="1"/>
</dbReference>
<dbReference type="PROSITE" id="PS00134">
    <property type="entry name" value="TRYPSIN_HIS"/>
    <property type="match status" value="1"/>
</dbReference>
<dbReference type="PROSITE" id="PS00135">
    <property type="entry name" value="TRYPSIN_SER"/>
    <property type="match status" value="1"/>
</dbReference>
<keyword id="KW-0068">Autocatalytic cleavage</keyword>
<keyword id="KW-0106">Calcium</keyword>
<keyword id="KW-1003">Cell membrane</keyword>
<keyword id="KW-1015">Disulfide bond</keyword>
<keyword id="KW-0325">Glycoprotein</keyword>
<keyword id="KW-0378">Hydrolase</keyword>
<keyword id="KW-0472">Membrane</keyword>
<keyword id="KW-0479">Metal-binding</keyword>
<keyword id="KW-0645">Protease</keyword>
<keyword id="KW-1185">Reference proteome</keyword>
<keyword id="KW-0964">Secreted</keyword>
<keyword id="KW-0720">Serine protease</keyword>
<keyword id="KW-0735">Signal-anchor</keyword>
<keyword id="KW-0812">Transmembrane</keyword>
<keyword id="KW-1133">Transmembrane helix</keyword>
<keyword id="KW-0865">Zymogen</keyword>
<organism>
    <name type="scientific">Mus musculus</name>
    <name type="common">Mouse</name>
    <dbReference type="NCBI Taxonomy" id="10090"/>
    <lineage>
        <taxon>Eukaryota</taxon>
        <taxon>Metazoa</taxon>
        <taxon>Chordata</taxon>
        <taxon>Craniata</taxon>
        <taxon>Vertebrata</taxon>
        <taxon>Euteleostomi</taxon>
        <taxon>Mammalia</taxon>
        <taxon>Eutheria</taxon>
        <taxon>Euarchontoglires</taxon>
        <taxon>Glires</taxon>
        <taxon>Rodentia</taxon>
        <taxon>Myomorpha</taxon>
        <taxon>Muroidea</taxon>
        <taxon>Muridae</taxon>
        <taxon>Murinae</taxon>
        <taxon>Mus</taxon>
        <taxon>Mus</taxon>
    </lineage>
</organism>
<protein>
    <recommendedName>
        <fullName evidence="13">Transmembrane protease serine 2</fullName>
        <ecNumber evidence="2">3.4.21.122</ecNumber>
    </recommendedName>
    <alternativeName>
        <fullName>Epitheliasin</fullName>
    </alternativeName>
    <alternativeName>
        <fullName>Plasmic transmembrane protein X</fullName>
    </alternativeName>
    <component>
        <recommendedName>
            <fullName>Transmembrane protease serine 2 non-catalytic chain</fullName>
        </recommendedName>
    </component>
    <component>
        <recommendedName>
            <fullName>Transmembrane protease serine 2 catalytic chain</fullName>
        </recommendedName>
    </component>
</protein>
<gene>
    <name type="primary">Tmprss2</name>
</gene>
<evidence type="ECO:0000250" key="1"/>
<evidence type="ECO:0000250" key="2">
    <source>
        <dbReference type="UniProtKB" id="O15393"/>
    </source>
</evidence>
<evidence type="ECO:0000255" key="3"/>
<evidence type="ECO:0000255" key="4">
    <source>
        <dbReference type="PROSITE-ProRule" id="PRU00124"/>
    </source>
</evidence>
<evidence type="ECO:0000255" key="5">
    <source>
        <dbReference type="PROSITE-ProRule" id="PRU00196"/>
    </source>
</evidence>
<evidence type="ECO:0000255" key="6">
    <source>
        <dbReference type="PROSITE-ProRule" id="PRU00274"/>
    </source>
</evidence>
<evidence type="ECO:0000269" key="7">
    <source>
    </source>
</evidence>
<evidence type="ECO:0000269" key="8">
    <source>
    </source>
</evidence>
<evidence type="ECO:0000269" key="9">
    <source>
    </source>
</evidence>
<evidence type="ECO:0000269" key="10">
    <source>
    </source>
</evidence>
<evidence type="ECO:0000269" key="11">
    <source>
    </source>
</evidence>
<evidence type="ECO:0000269" key="12">
    <source>
    </source>
</evidence>
<evidence type="ECO:0000305" key="13"/>
<feature type="chain" id="PRO_0000027857" description="Transmembrane protease serine 2 non-catalytic chain">
    <location>
        <begin position="1"/>
        <end position="253"/>
    </location>
</feature>
<feature type="chain" id="PRO_0000027858" description="Transmembrane protease serine 2 catalytic chain">
    <location>
        <begin position="254"/>
        <end position="490"/>
    </location>
</feature>
<feature type="topological domain" description="Cytoplasmic" evidence="3">
    <location>
        <begin position="1"/>
        <end position="83"/>
    </location>
</feature>
<feature type="transmembrane region" description="Helical; Signal-anchor for type II membrane protein" evidence="3">
    <location>
        <begin position="84"/>
        <end position="104"/>
    </location>
</feature>
<feature type="topological domain" description="Extracellular" evidence="3">
    <location>
        <begin position="105"/>
        <end position="490"/>
    </location>
</feature>
<feature type="domain" description="LDL-receptor class A" evidence="4">
    <location>
        <begin position="111"/>
        <end position="149"/>
    </location>
</feature>
<feature type="domain" description="SRCR" evidence="5">
    <location>
        <begin position="150"/>
        <end position="242"/>
    </location>
</feature>
<feature type="domain" description="Peptidase S1" evidence="6">
    <location>
        <begin position="254"/>
        <end position="487"/>
    </location>
</feature>
<feature type="active site" description="Charge relay system" evidence="2">
    <location>
        <position position="294"/>
    </location>
</feature>
<feature type="active site" description="Charge relay system" evidence="2">
    <location>
        <position position="343"/>
    </location>
</feature>
<feature type="active site" description="Charge relay system" evidence="2">
    <location>
        <position position="439"/>
    </location>
</feature>
<feature type="binding site" evidence="2">
    <location>
        <position position="133"/>
    </location>
    <ligand>
        <name>Ca(2+)</name>
        <dbReference type="ChEBI" id="CHEBI:29108"/>
    </ligand>
</feature>
<feature type="binding site" evidence="2">
    <location>
        <position position="135"/>
    </location>
    <ligand>
        <name>Ca(2+)</name>
        <dbReference type="ChEBI" id="CHEBI:29108"/>
    </ligand>
</feature>
<feature type="binding site" evidence="2">
    <location>
        <position position="143"/>
    </location>
    <ligand>
        <name>Ca(2+)</name>
        <dbReference type="ChEBI" id="CHEBI:29108"/>
    </ligand>
</feature>
<feature type="binding site" evidence="2">
    <location>
        <position position="144"/>
    </location>
    <ligand>
        <name>Ca(2+)</name>
        <dbReference type="ChEBI" id="CHEBI:29108"/>
    </ligand>
</feature>
<feature type="site" description="Cleavage; by autolysis" evidence="2">
    <location>
        <begin position="253"/>
        <end position="254"/>
    </location>
</feature>
<feature type="glycosylation site" description="N-linked (GlcNAc...) asparagine" evidence="3">
    <location>
        <position position="111"/>
    </location>
</feature>
<feature type="glycosylation site" description="N-linked (GlcNAc...) asparagine" evidence="2">
    <location>
        <position position="212"/>
    </location>
</feature>
<feature type="glycosylation site" description="N-linked (GlcNAc...) asparagine" evidence="3">
    <location>
        <position position="474"/>
    </location>
</feature>
<feature type="disulfide bond" evidence="1">
    <location>
        <begin position="112"/>
        <end position="125"/>
    </location>
</feature>
<feature type="disulfide bond" evidence="2">
    <location>
        <begin position="119"/>
        <end position="138"/>
    </location>
</feature>
<feature type="disulfide bond" evidence="2">
    <location>
        <begin position="132"/>
        <end position="147"/>
    </location>
</feature>
<feature type="disulfide bond" evidence="2">
    <location>
        <begin position="171"/>
        <end position="230"/>
    </location>
</feature>
<feature type="disulfide bond" evidence="2">
    <location>
        <begin position="184"/>
        <end position="240"/>
    </location>
</feature>
<feature type="disulfide bond" description="Interchain (between non-catalytic and catalytic chains)" evidence="4 5 6">
    <location>
        <begin position="243"/>
        <end position="363"/>
    </location>
</feature>
<feature type="disulfide bond" evidence="2">
    <location>
        <begin position="279"/>
        <end position="295"/>
    </location>
</feature>
<feature type="disulfide bond" evidence="2">
    <location>
        <begin position="408"/>
        <end position="424"/>
    </location>
</feature>
<feature type="disulfide bond" evidence="2">
    <location>
        <begin position="435"/>
        <end position="463"/>
    </location>
</feature>
<feature type="sequence conflict" description="In Ref. 1; AAF97867, 2; AAF64186, 3; AAF21308 and 4; AAH38393." evidence="13" ref="1 2 3 4">
    <original>L</original>
    <variation>P</variation>
    <location>
        <position position="75"/>
    </location>
</feature>
<feature type="sequence conflict" description="In Ref. 3; AAF21308." evidence="13" ref="3">
    <original>S</original>
    <variation>L</variation>
    <location>
        <position position="122"/>
    </location>
</feature>
<feature type="sequence conflict" description="In Ref. 3; AAF21308." evidence="13" ref="3">
    <original>S</original>
    <variation>N</variation>
    <location>
        <position position="178"/>
    </location>
</feature>
<feature type="sequence conflict" description="In Ref. 1; AAF97867, 2; AAF64186, 3; AAF21308 and 4; AAH38393." evidence="13" ref="1 2 3 4">
    <original>S</original>
    <variation>G</variation>
    <location>
        <position position="302"/>
    </location>
</feature>
<feature type="sequence conflict" description="In Ref. 1; AAF97867." evidence="13" ref="1">
    <original>Y</original>
    <variation>H</variation>
    <location>
        <position position="320"/>
    </location>
</feature>
<feature type="sequence conflict" description="In Ref. 1; AAF97867." evidence="13" ref="1">
    <original>N</original>
    <variation>D</variation>
    <location>
        <position position="474"/>
    </location>
</feature>
<sequence length="490" mass="53526">MALNSGSPPGIGPCYENHGYQSEHICPPRPPVAPNGYNLYPAQYYPSPVPQYAPRITTQASTSVIHTHPKSSGALCTSKSKKSLCLALALGTVLTGAAVAAVLLWRFWDSNCSTSEMECGSSGTCISSSLWCDGVAHCPNGEDENRCVRLYGQSFILQVYSSQRKAWYPVCQDDWSESYGRAACKDMGYKNNFYSSQGIPDQSGATSFMKLNVSSGNVDLYKKLYHSDSCSSRMVVSLRCIECGVRSVKRQSRIVGGLNASPGDWPWQVSLHVQGVHVCGGSIITPEWIVTAAHCVEEPLSSPRYWTAFAGILRQSLMFYGSRHQVEKVISHPNYDSKTKNNDIALMKLQTPLAFNDLVKPVCLPNPGMMLDLDQECWISGWGATYEKGKTSDVLNAAMVPLIEPSKCNSKYIYNNLITPAMICAGFLQGSVDSCQGDSGGPLVTLKNGIWWLIGDTSWGSGCAKALRPGVYGNVTVFTDWIYQQMRANS</sequence>
<proteinExistence type="evidence at transcript level"/>
<accession>Q9JIQ8</accession>
<accession>Q7TN04</accession>
<accession>Q9JKC4</accession>
<accession>Q9QY82</accession>
<reference key="1">
    <citation type="journal article" date="2001" name="J. Pathol.">
        <title>Expression of transmembrane serine protease TMPRSS2 in mouse and human tissues.</title>
        <authorList>
            <person name="Vaarala M.H."/>
            <person name="Porvari K.S."/>
            <person name="Kellokumpu S."/>
            <person name="Kyllonen A.P."/>
            <person name="Vihko P.T."/>
        </authorList>
    </citation>
    <scope>NUCLEOTIDE SEQUENCE [MRNA]</scope>
    <scope>TISSUE SPECIFICITY</scope>
    <source>
        <strain>BALB/cJ</strain>
    </source>
</reference>
<reference key="2">
    <citation type="submission" date="2000-03" db="EMBL/GenBank/DDBJ databases">
        <title>Putative transmembrane protease X.</title>
        <authorList>
            <person name="Han J."/>
            <person name="Kim S."/>
        </authorList>
    </citation>
    <scope>NUCLEOTIDE SEQUENCE [MRNA]</scope>
</reference>
<reference key="3">
    <citation type="journal article" date="2000" name="FEBS Lett.">
        <title>Cloning, genomic organization, chromosomal assignment and expression of a novel mosaic serine proteinase: epitheliasin.</title>
        <authorList>
            <person name="Jacquinet E.J."/>
            <person name="Rao N.V."/>
            <person name="Rao G.V."/>
            <person name="Hoidal J.R."/>
        </authorList>
    </citation>
    <scope>NUCLEOTIDE SEQUENCE [MRNA]</scope>
    <source>
        <strain>BALB/cJ</strain>
    </source>
</reference>
<reference key="4">
    <citation type="journal article" date="2004" name="Genome Res.">
        <title>The status, quality, and expansion of the NIH full-length cDNA project: the Mammalian Gene Collection (MGC).</title>
        <authorList>
            <consortium name="The MGC Project Team"/>
        </authorList>
    </citation>
    <scope>NUCLEOTIDE SEQUENCE [LARGE SCALE MRNA]</scope>
    <source>
        <strain>129</strain>
        <tissue>Mammary gland</tissue>
    </source>
</reference>
<reference key="5">
    <citation type="journal article" date="2006" name="Mol. Cell. Biol.">
        <title>Phenotypic analysis of mice lacking the Tmprss2-encoded protease.</title>
        <authorList>
            <person name="Kim T.S."/>
            <person name="Heinlein C."/>
            <person name="Hackman R.C."/>
            <person name="Nelson P.S."/>
        </authorList>
    </citation>
    <scope>DISRUPTION PHENOTYPE</scope>
</reference>
<reference key="6">
    <citation type="journal article" date="2013" name="PLoS Pathog.">
        <title>Tmprss2 is essential for influenza H1N1 virus pathogenesis in mice.</title>
        <authorList>
            <person name="Hatesuer B."/>
            <person name="Bertram S."/>
            <person name="Mehnert N."/>
            <person name="Bahgat M.M."/>
            <person name="Nelson P.S."/>
            <person name="Poehlman S."/>
            <person name="Schughart K."/>
        </authorList>
    </citation>
    <scope>FUNCTION (MICROBIAL INFECTION)</scope>
</reference>
<reference key="7">
    <citation type="journal article" date="2014" name="J. Virol.">
        <title>The host protease TMPRSS2 plays a major role for in vivo replication of emerging H7N9 and seasonal influenza viruses.</title>
        <authorList>
            <person name="Sakai K."/>
            <person name="Ami Y."/>
            <person name="Tahara M."/>
            <person name="Kubota T."/>
            <person name="Anraku M."/>
            <person name="Abe M."/>
            <person name="Nakajima N."/>
            <person name="Sekizuka T."/>
            <person name="Shirato K."/>
            <person name="Suzaki Y."/>
            <person name="Ainai A."/>
            <person name="Nakatsu Y."/>
            <person name="Kanou K."/>
            <person name="Nakamura K."/>
            <person name="Suzuki T."/>
            <person name="Komase K."/>
            <person name="Nobusawa E."/>
            <person name="Maenaka K."/>
            <person name="Kuroda M."/>
            <person name="Hasegawa H."/>
            <person name="Kawaoka Y."/>
            <person name="Tashiro M."/>
            <person name="Takeda M."/>
        </authorList>
    </citation>
    <scope>FUNCTION (MICROBIAL INFECTION)</scope>
    <scope>DISRUPTION PHENOTYPE</scope>
</reference>
<reference key="8">
    <citation type="journal article" date="2014" name="J. Virol.">
        <title>TMPRSS2 is a host factor that is essential for pneumotropism and pathogenicity of H7N9 influenza A virus in mice.</title>
        <authorList>
            <person name="Tarnow C."/>
            <person name="Engels G."/>
            <person name="Arendt A."/>
            <person name="Schwalm F."/>
            <person name="Sediri H."/>
            <person name="Preuss A."/>
            <person name="Nelson P.S."/>
            <person name="Garten W."/>
            <person name="Klenk H.D."/>
            <person name="Gabriel G."/>
            <person name="Boettcher-Friebertshaeuser E."/>
        </authorList>
    </citation>
    <scope>FUNCTION (MICROBIAL INFECTION)</scope>
    <scope>DISRUPTION PHENOTYPE</scope>
    <scope>TISSUE SPECIFICITY</scope>
</reference>
<reference key="9">
    <citation type="journal article" date="2015" name="Pain">
        <title>TMPRSS2, a novel membrane-anchored mediator in cancer pain.</title>
        <authorList>
            <person name="Lam D.K."/>
            <person name="Dang D."/>
            <person name="Flynn A.N."/>
            <person name="Hardt M."/>
            <person name="Schmidt B.L."/>
        </authorList>
    </citation>
    <scope>FUNCTION</scope>
</reference>